<dbReference type="EC" id="3.2.1.23"/>
<dbReference type="EMBL" id="DQ887754">
    <property type="protein sequence ID" value="ABI84370.1"/>
    <property type="molecule type" value="Genomic_DNA"/>
</dbReference>
<dbReference type="EMBL" id="CP001727">
    <property type="protein sequence ID" value="ACV59895.1"/>
    <property type="molecule type" value="Genomic_DNA"/>
</dbReference>
<dbReference type="RefSeq" id="WP_012812096.1">
    <property type="nucleotide sequence ID" value="NC_013205.1"/>
</dbReference>
<dbReference type="SMR" id="C8WV58"/>
<dbReference type="STRING" id="521098.Aaci_2891"/>
<dbReference type="CAZy" id="GH42">
    <property type="family name" value="Glycoside Hydrolase Family 42"/>
</dbReference>
<dbReference type="KEGG" id="aac:Aaci_2891"/>
<dbReference type="eggNOG" id="COG1874">
    <property type="taxonomic scope" value="Bacteria"/>
</dbReference>
<dbReference type="HOGENOM" id="CLU_012430_1_1_9"/>
<dbReference type="Proteomes" id="UP000001917">
    <property type="component" value="Chromosome"/>
</dbReference>
<dbReference type="GO" id="GO:0009341">
    <property type="term" value="C:beta-galactosidase complex"/>
    <property type="evidence" value="ECO:0007669"/>
    <property type="project" value="InterPro"/>
</dbReference>
<dbReference type="GO" id="GO:0004565">
    <property type="term" value="F:beta-galactosidase activity"/>
    <property type="evidence" value="ECO:0007669"/>
    <property type="project" value="UniProtKB-EC"/>
</dbReference>
<dbReference type="GO" id="GO:0046872">
    <property type="term" value="F:metal ion binding"/>
    <property type="evidence" value="ECO:0007669"/>
    <property type="project" value="UniProtKB-KW"/>
</dbReference>
<dbReference type="GO" id="GO:0006012">
    <property type="term" value="P:galactose metabolic process"/>
    <property type="evidence" value="ECO:0007669"/>
    <property type="project" value="InterPro"/>
</dbReference>
<dbReference type="CDD" id="cd03143">
    <property type="entry name" value="A4_beta-galactosidase_middle_domain"/>
    <property type="match status" value="1"/>
</dbReference>
<dbReference type="Gene3D" id="3.40.50.880">
    <property type="match status" value="1"/>
</dbReference>
<dbReference type="Gene3D" id="3.20.20.80">
    <property type="entry name" value="Glycosidases"/>
    <property type="match status" value="1"/>
</dbReference>
<dbReference type="Gene3D" id="2.60.40.1180">
    <property type="entry name" value="Golgi alpha-mannosidase II"/>
    <property type="match status" value="1"/>
</dbReference>
<dbReference type="InterPro" id="IPR013739">
    <property type="entry name" value="Beta_galactosidase_C"/>
</dbReference>
<dbReference type="InterPro" id="IPR013738">
    <property type="entry name" value="Beta_galactosidase_Trimer"/>
</dbReference>
<dbReference type="InterPro" id="IPR029062">
    <property type="entry name" value="Class_I_gatase-like"/>
</dbReference>
<dbReference type="InterPro" id="IPR003476">
    <property type="entry name" value="Glyco_hydro_42"/>
</dbReference>
<dbReference type="InterPro" id="IPR013529">
    <property type="entry name" value="Glyco_hydro_42_N"/>
</dbReference>
<dbReference type="InterPro" id="IPR013780">
    <property type="entry name" value="Glyco_hydro_b"/>
</dbReference>
<dbReference type="InterPro" id="IPR017853">
    <property type="entry name" value="Glycoside_hydrolase_SF"/>
</dbReference>
<dbReference type="PANTHER" id="PTHR36447">
    <property type="entry name" value="BETA-GALACTOSIDASE GANA"/>
    <property type="match status" value="1"/>
</dbReference>
<dbReference type="PANTHER" id="PTHR36447:SF1">
    <property type="entry name" value="BETA-GALACTOSIDASE GANA"/>
    <property type="match status" value="1"/>
</dbReference>
<dbReference type="Pfam" id="PF02449">
    <property type="entry name" value="Glyco_hydro_42"/>
    <property type="match status" value="1"/>
</dbReference>
<dbReference type="Pfam" id="PF08533">
    <property type="entry name" value="Glyco_hydro_42C"/>
    <property type="match status" value="1"/>
</dbReference>
<dbReference type="Pfam" id="PF08532">
    <property type="entry name" value="Glyco_hydro_42M"/>
    <property type="match status" value="1"/>
</dbReference>
<dbReference type="PIRSF" id="PIRSF001084">
    <property type="entry name" value="B-galactosidase"/>
    <property type="match status" value="1"/>
</dbReference>
<dbReference type="SUPFAM" id="SSF51445">
    <property type="entry name" value="(Trans)glycosidases"/>
    <property type="match status" value="1"/>
</dbReference>
<dbReference type="SUPFAM" id="SSF52317">
    <property type="entry name" value="Class I glutamine amidotransferase-like"/>
    <property type="match status" value="1"/>
</dbReference>
<proteinExistence type="evidence at protein level"/>
<protein>
    <recommendedName>
        <fullName>Beta-galactosidase BglY</fullName>
        <shortName evidence="2">Beta-gal</shortName>
        <ecNumber>3.2.1.23</ecNumber>
    </recommendedName>
</protein>
<name>BGAL_ALIAD</name>
<reference evidence="6" key="1">
    <citation type="journal article" date="2008" name="Biotechnol. Lett.">
        <title>Heterologous expression of a gene encoding a thermostable beta-galactosidase from Alicyclobacillus acidocaldarius.</title>
        <authorList>
            <person name="Yuan T."/>
            <person name="Yang P."/>
            <person name="Wang Y."/>
            <person name="Meng K."/>
            <person name="Luo H."/>
            <person name="Zhang W."/>
            <person name="Wu N."/>
            <person name="Fan Y."/>
            <person name="Yao B."/>
        </authorList>
    </citation>
    <scope>NUCLEOTIDE SEQUENCE [GENOMIC DNA]</scope>
    <scope>PROTEIN SEQUENCE OF 2-8; 536-551 AND 637-649</scope>
    <scope>FUNCTION</scope>
    <scope>CATALYTIC ACTIVITY</scope>
    <scope>ACTIVITY REGULATION</scope>
    <scope>BIOPHYSICOCHEMICAL PROPERTIES</scope>
    <scope>BIOTECHNOLOGY</scope>
    <source>
        <strain evidence="6">ATCC 27009 / DSM 446 / BCRC 14685 / JCM 5260 / KCTC 1825 / NBRC 15652 / NCIMB 11725 / NRRL B-14509 / 104-IA</strain>
    </source>
</reference>
<reference key="2">
    <citation type="submission" date="2009-09" db="EMBL/GenBank/DDBJ databases">
        <title>The complete chromosome of Alicyclobacillus acidocaldarius subsp. acidocaldarius DSM 446.</title>
        <authorList>
            <consortium name="US DOE Joint Genome Institute (JGI-PGF)"/>
            <person name="Lucas S."/>
            <person name="Copeland A."/>
            <person name="Lapidus A."/>
            <person name="Glavina del Rio T."/>
            <person name="Dalin E."/>
            <person name="Tice H."/>
            <person name="Bruce D."/>
            <person name="Goodwin L."/>
            <person name="Pitluck S."/>
            <person name="Kyrpides N."/>
            <person name="Mavromatis K."/>
            <person name="Ivanova N."/>
            <person name="Ovchinnikova G."/>
            <person name="Chertkov O."/>
            <person name="Sims D."/>
            <person name="Brettin T."/>
            <person name="Detter J.C."/>
            <person name="Han C."/>
            <person name="Larimer F."/>
            <person name="Land M."/>
            <person name="Hauser L."/>
            <person name="Markowitz V."/>
            <person name="Cheng J.-F."/>
            <person name="Hugenholtz P."/>
            <person name="Woyke T."/>
            <person name="Wu D."/>
            <person name="Pukall R."/>
            <person name="Klenk H.-P."/>
            <person name="Eisen J.A."/>
        </authorList>
    </citation>
    <scope>NUCLEOTIDE SEQUENCE [LARGE SCALE GENOMIC DNA]</scope>
    <source>
        <strain evidence="7">ATCC 27009 / DSM 446 / BCRC 14685 / JCM 5260 / KCTC 1825 / NBRC 15652 / NCIMB 11725 / NRRL B-14509 / 104-IA</strain>
    </source>
</reference>
<feature type="chain" id="PRO_0000407679" description="Beta-galactosidase BglY">
    <location>
        <begin position="1"/>
        <end position="688"/>
    </location>
</feature>
<feature type="active site" description="Proton donor" evidence="1">
    <location>
        <position position="157"/>
    </location>
</feature>
<feature type="active site" description="Nucleophile" evidence="1">
    <location>
        <position position="313"/>
    </location>
</feature>
<feature type="binding site" evidence="1">
    <location>
        <position position="118"/>
    </location>
    <ligand>
        <name>substrate</name>
    </ligand>
</feature>
<feature type="binding site" evidence="1">
    <location>
        <position position="122"/>
    </location>
    <ligand>
        <name>Zn(2+)</name>
        <dbReference type="ChEBI" id="CHEBI:29105"/>
    </ligand>
</feature>
<feature type="binding site" evidence="1">
    <location>
        <position position="156"/>
    </location>
    <ligand>
        <name>substrate</name>
    </ligand>
</feature>
<feature type="binding site" evidence="1">
    <location>
        <position position="162"/>
    </location>
    <ligand>
        <name>Zn(2+)</name>
        <dbReference type="ChEBI" id="CHEBI:29105"/>
    </ligand>
</feature>
<feature type="binding site" evidence="1">
    <location>
        <position position="164"/>
    </location>
    <ligand>
        <name>Zn(2+)</name>
        <dbReference type="ChEBI" id="CHEBI:29105"/>
    </ligand>
</feature>
<feature type="binding site" evidence="1">
    <location>
        <position position="167"/>
    </location>
    <ligand>
        <name>Zn(2+)</name>
        <dbReference type="ChEBI" id="CHEBI:29105"/>
    </ligand>
</feature>
<feature type="binding site" evidence="1">
    <location>
        <position position="321"/>
    </location>
    <ligand>
        <name>substrate</name>
    </ligand>
</feature>
<feature type="binding site" evidence="1">
    <location>
        <begin position="361"/>
        <end position="364"/>
    </location>
    <ligand>
        <name>substrate</name>
    </ligand>
</feature>
<feature type="sequence conflict" description="In Ref. 1; AA sequence." evidence="5" ref="1">
    <location>
        <begin position="543"/>
        <end position="544"/>
    </location>
</feature>
<organism>
    <name type="scientific">Alicyclobacillus acidocaldarius subsp. acidocaldarius (strain ATCC 27009 / DSM 446 / BCRC 14685 / JCM 5260 / KCTC 1825 / NBRC 15652 / NCIMB 11725 / NRRL B-14509 / 104-IA)</name>
    <name type="common">Bacillus acidocaldarius</name>
    <dbReference type="NCBI Taxonomy" id="521098"/>
    <lineage>
        <taxon>Bacteria</taxon>
        <taxon>Bacillati</taxon>
        <taxon>Bacillota</taxon>
        <taxon>Bacilli</taxon>
        <taxon>Bacillales</taxon>
        <taxon>Alicyclobacillaceae</taxon>
        <taxon>Alicyclobacillus</taxon>
    </lineage>
</organism>
<evidence type="ECO:0000250" key="1">
    <source>
        <dbReference type="UniProtKB" id="O69315"/>
    </source>
</evidence>
<evidence type="ECO:0000250" key="2">
    <source>
        <dbReference type="UniProtKB" id="Q65CX4"/>
    </source>
</evidence>
<evidence type="ECO:0000255" key="3"/>
<evidence type="ECO:0000269" key="4">
    <source>
    </source>
</evidence>
<evidence type="ECO:0000305" key="5"/>
<evidence type="ECO:0000312" key="6">
    <source>
        <dbReference type="EMBL" id="ABI84370.1"/>
    </source>
</evidence>
<evidence type="ECO:0000312" key="7">
    <source>
        <dbReference type="EMBL" id="ACV59895.1"/>
    </source>
</evidence>
<accession>C8WV58</accession>
<accession>Q06GJ1</accession>
<sequence length="688" mass="77869">MAKHAPIFPNVQGFLHGGDYNPDQWLAYPDVLEQDVQLMREAKWNVVSLGIFSWVSLEPEEGLFTFEWLDEAIERLTHAGVRILLATPSGARPAWLSAKYPEVLRVGPDGRRNRHGGRHNHCYTSPIYREKVRIINRKLAERYAHHPGVIGWHVSNEYGGECHCPLCQEAFREWLKRKYKTLDALNHAWWTPFWSHTYTDWSQIESPMPHGETSIHGLNLDWKRFVTDQTVDFCRHEIEPLKQVNPNLPVTTNFMGTYPGLNYWRFRDVLDVISWDSYPRWHAHETLVPEAVHTAMVHDLNRSILKKPFLLMESTPSVTNWQAVSKQKRPGVHVLVSLQAVAHGADSVQYFQWRKSRGSYEKFHGAVVDHVGHANTRVFRDVQAVGEMLERLAPMAGAEVKADAAVIFDWENRWALEDAKGPRNIGMHYEETVVNHYAALWRMGVPMDVIDEEQPLDGYKLVVAPMLYMVRPGVAERMKAFVERGGSLVLTYWSGIVDENDLVFLGGFPGPLRELAGVWAEEIDALYDGERVPVRVADGNPLGLAGHYEARELCEVVHLEGAEPIAVYGADYYEGMPAATVHRVGKGKVYYVAARLEDAFLRDFFARVAAEAGVARAIERELPDGVSAMVRSGDGVEYVMLMNFTPEAREVALDEAEYKPLYGEAPTDGAVRLPAYGVSVLERPARNG</sequence>
<comment type="function">
    <text evidence="4">Hydrolyzes o-nitrophenyl-beta-D-galactopyranoside (ONPG) and p-nitrophenyl-beta-D-fucopyranoside (PNPF), but not p-nitrophenyl-beta-D-glucopyranoside (PNPG), p-nitrophenyl-beta-D-xylopyranoside (PNPX) or p-nitrophenyl-beta-D-arabinopyranoside (PNPA). Also hydrolyzes lactose, including lactose in milk.</text>
</comment>
<comment type="catalytic activity">
    <reaction evidence="4">
        <text>Hydrolysis of terminal non-reducing beta-D-galactose residues in beta-D-galactosides.</text>
        <dbReference type="EC" id="3.2.1.23"/>
    </reaction>
</comment>
<comment type="activity regulation">
    <text evidence="4">Ca(2+), Mg(2+) and EDTA have little effect on enzyme activity at 1-10 mM. Zn(2+) at 3, 5, 7 or 10 mM inhibits activity by 20%, 30%, 40% and 65%, respectively.</text>
</comment>
<comment type="biophysicochemical properties">
    <kinetics>
        <KM evidence="4">6 mM for ONPG (at 60 degrees Celsius and pH 6.0)</KM>
        <KM evidence="4">3.5 mM for PNPF (at 60 degrees Celsius and pH 6.0)</KM>
    </kinetics>
    <phDependence>
        <text evidence="4">Optimum pH is 5.8. Approximately 80% of activity retained after incubating the enzyme for 40 minutes in buffers ranging from pH 5.0 to pH 10.5.</text>
    </phDependence>
    <temperatureDependence>
        <text evidence="4">Optimum temperature is 70 degrees Celsius. Retains 90% of activity when heated at 70 degrees Celsius for 30 minutes. Approximately 48% of lactose in milk is hydrolyzed following treatment with enzyme at 65 degrees Celsius over 60 minutes.</text>
    </temperatureDependence>
</comment>
<comment type="biotechnology">
    <text evidence="4">Has potential use in hydrolyzing lactose in neutral pH dairy products such as whole milk or whey. Also could be used in milk lactose hydrolysis during pasteurization at high temperatures.</text>
</comment>
<comment type="similarity">
    <text evidence="3">Belongs to the glycosyl hydrolase 42 family.</text>
</comment>
<keyword id="KW-0903">Direct protein sequencing</keyword>
<keyword id="KW-0326">Glycosidase</keyword>
<keyword id="KW-0378">Hydrolase</keyword>
<keyword id="KW-0479">Metal-binding</keyword>
<keyword id="KW-1185">Reference proteome</keyword>
<keyword id="KW-0862">Zinc</keyword>
<gene>
    <name type="primary">bglY</name>
    <name type="ordered locus">Aaci_2891</name>
</gene>